<evidence type="ECO:0000255" key="1">
    <source>
        <dbReference type="HAMAP-Rule" id="MF_04049"/>
    </source>
</evidence>
<evidence type="ECO:0000305" key="2"/>
<organismHost>
    <name type="scientific">Homo sapiens</name>
    <name type="common">Human</name>
    <dbReference type="NCBI Taxonomy" id="9606"/>
</organismHost>
<comment type="function">
    <molecule>Hexon-linking protein-N</molecule>
    <text evidence="1">Structural component of the virion that acts as a cement protein on the capsid interior and which glue the peripentonal hexons and group-of-nine hexons together.</text>
</comment>
<comment type="function">
    <molecule>Hexon-linking protein-C</molecule>
    <text evidence="1">Structural component of the virion that acts as a cement protein on the capsid interior and which glue the peripentonal hexons and group-of-nine hexons together.</text>
</comment>
<comment type="subunit">
    <text evidence="1">Interacts with the peripentonal hexons as well as the hexons in the facets. Part of a complex composed of the core-capsid bridging protein, the endosome lysis protein VI and the hexon-linking protein VIII; these interactions bridge the virus core to the capsid.</text>
</comment>
<comment type="subcellular location">
    <molecule>Hexon-linking protein-C</molecule>
    <subcellularLocation>
        <location evidence="1">Virion</location>
    </subcellularLocation>
    <text evidence="1">Located on the inner side of the capsid shell. Present in 120 copies per virion.</text>
</comment>
<comment type="subcellular location">
    <molecule>Pre-hexon-linking protein VIII</molecule>
    <subcellularLocation>
        <location evidence="1">Host nucleus</location>
    </subcellularLocation>
</comment>
<comment type="subcellular location">
    <molecule>Hexon-linking protein-N</molecule>
    <subcellularLocation>
        <location evidence="1">Virion</location>
    </subcellularLocation>
    <text evidence="1">Located on the inner side of the capsid shell. Present in 120 copies per virion.</text>
</comment>
<comment type="induction">
    <text evidence="1">Expressed in the late phase of the viral replicative cycle.</text>
</comment>
<comment type="PTM">
    <text evidence="1">Cleaved by the viral protease during virion maturation. May cause the middle segment to be shed from the capsid.</text>
</comment>
<comment type="miscellaneous">
    <text evidence="1">All late proteins expressed from the major late promoter are produced by alternative splicing and alternative polyadenylation of the same gene giving rise to non-overlapping ORFs. A leader sequence is present in the N-terminus of all these mRNAs and is recognized by the viral shutoff protein to provide expression although conventional translation via ribosome scanning from the cap has been shut off in the host cell.</text>
</comment>
<comment type="similarity">
    <text evidence="1 2">Belongs to the adenoviridae hexon-linking protein family.</text>
</comment>
<proteinExistence type="evidence at protein level"/>
<protein>
    <recommendedName>
        <fullName evidence="1">Pre-hexon-linking protein VIII</fullName>
    </recommendedName>
    <alternativeName>
        <fullName evidence="1">Pre-protein VIII</fullName>
        <shortName evidence="1">pVIII</shortName>
    </alternativeName>
    <component>
        <recommendedName>
            <fullName evidence="1">Hexon-linking protein-N</fullName>
        </recommendedName>
        <alternativeName>
            <fullName evidence="1">12.1 kDa protein VIII</fullName>
        </alternativeName>
        <alternativeName>
            <fullName evidence="1">Protein VIII-N</fullName>
        </alternativeName>
    </component>
    <component>
        <recommendedName>
            <fullName evidence="1">Hexon-linking protein-C</fullName>
        </recommendedName>
        <alternativeName>
            <fullName evidence="1">7.6 kDa protein VIII</fullName>
        </alternativeName>
        <alternativeName>
            <fullName evidence="1">Protein VIII-C</fullName>
        </alternativeName>
    </component>
</protein>
<dbReference type="EMBL" id="X15137">
    <property type="protein sequence ID" value="CAA33237.1"/>
    <property type="molecule type" value="Genomic_DNA"/>
</dbReference>
<dbReference type="EMBL" id="X52532">
    <property type="protein sequence ID" value="CAA36768.1"/>
    <property type="molecule type" value="Genomic_DNA"/>
</dbReference>
<dbReference type="PIR" id="A30920">
    <property type="entry name" value="SXAD41"/>
</dbReference>
<dbReference type="PDB" id="6YBA">
    <property type="method" value="EM"/>
    <property type="resolution" value="4.00 A"/>
    <property type="chains" value="O/P=1-233"/>
</dbReference>
<dbReference type="PDB" id="6Z7N">
    <property type="method" value="EM"/>
    <property type="resolution" value="3.77 A"/>
    <property type="chains" value="T/U=1-233"/>
</dbReference>
<dbReference type="PDBsum" id="6YBA"/>
<dbReference type="PDBsum" id="6Z7N"/>
<dbReference type="EMDB" id="EMD-11108"/>
<dbReference type="SMR" id="P11822"/>
<dbReference type="GO" id="GO:0042025">
    <property type="term" value="C:host cell nucleus"/>
    <property type="evidence" value="ECO:0007669"/>
    <property type="project" value="UniProtKB-SubCell"/>
</dbReference>
<dbReference type="GO" id="GO:0019028">
    <property type="term" value="C:viral capsid"/>
    <property type="evidence" value="ECO:0007669"/>
    <property type="project" value="UniProtKB-UniRule"/>
</dbReference>
<dbReference type="GO" id="GO:0031423">
    <property type="term" value="F:hexon binding"/>
    <property type="evidence" value="ECO:0007669"/>
    <property type="project" value="InterPro"/>
</dbReference>
<dbReference type="Gene3D" id="6.10.250.1460">
    <property type="match status" value="1"/>
</dbReference>
<dbReference type="HAMAP" id="MF_04049">
    <property type="entry name" value="ADV_CAP8"/>
    <property type="match status" value="1"/>
</dbReference>
<dbReference type="InterPro" id="IPR000646">
    <property type="entry name" value="Adeno_PVIII"/>
</dbReference>
<dbReference type="Pfam" id="PF01310">
    <property type="entry name" value="Adeno_PVIII"/>
    <property type="match status" value="1"/>
</dbReference>
<reference key="1">
    <citation type="journal article" date="1989" name="Nucleic Acids Res.">
        <title>Nucleotide sequence of human enteric adenovirus type 41 hexon-associated protein VIII precursor (pVIII) including the early region E3 promoter.</title>
        <authorList>
            <person name="Pieniazek N.J."/>
            <person name="Velarde J. Jr."/>
            <person name="Pieniazek D."/>
            <person name="Luftig R.B."/>
        </authorList>
    </citation>
    <scope>NUCLEOTIDE SEQUENCE [GENOMIC DNA]</scope>
    <source>
        <strain>Tak</strain>
    </source>
</reference>
<reference key="2">
    <citation type="journal article" date="1990" name="Nucleic Acids Res.">
        <title>Nucleotide sequence of the region coding for 100K and 33K proteins of human enteric adenovirus type 41 (Tak).</title>
        <authorList>
            <person name="Slemenda S.B."/>
            <person name="Pieniazek N.J."/>
            <person name="Velarde J. Jr."/>
            <person name="Pieniazek D."/>
            <person name="Luftig R.B."/>
        </authorList>
    </citation>
    <scope>NUCLEOTIDE SEQUENCE [GENOMIC DNA] OF 1-47</scope>
    <source>
        <strain>Tak</strain>
    </source>
</reference>
<sequence length="233" mass="25309">MSKEIPTPYMWSYQPQMGLAAGASQDYSSRMNWLSAGPHMIGRVNGIRATRNQILLEQAALTSTPRSQLNPPNWPAAQVYQENPAPTTVLLPRDAEAEVQMTNSGAQLAGGSRHVRFRGRSSPYSPGPIKRLIIRGRGIQLNDEVVSSLTGLRPDGVFQLGGAGRSSFTPRQAYLTLQSSSSQPRSGGIGTLQFVEEFVPSVYFNPFSGAPGLYPDDFIPNYDAVSESVDGYD</sequence>
<name>CAP8_ADE41</name>
<organism>
    <name type="scientific">Human adenovirus F serotype 41</name>
    <name type="common">HAdV-41</name>
    <name type="synonym">Human adenovirus 41</name>
    <dbReference type="NCBI Taxonomy" id="10524"/>
    <lineage>
        <taxon>Viruses</taxon>
        <taxon>Varidnaviria</taxon>
        <taxon>Bamfordvirae</taxon>
        <taxon>Preplasmiviricota</taxon>
        <taxon>Tectiliviricetes</taxon>
        <taxon>Rowavirales</taxon>
        <taxon>Adenoviridae</taxon>
        <taxon>Mastadenovirus</taxon>
        <taxon>Human mastadenovirus F</taxon>
    </lineage>
</organism>
<feature type="chain" id="PRO_0000421401" description="Pre-hexon-linking protein VIII" evidence="1">
    <location>
        <begin position="1"/>
        <end position="233"/>
    </location>
</feature>
<feature type="peptide" id="PRO_0000421402" description="Hexon-linking protein-N" evidence="1">
    <location>
        <begin position="1"/>
        <end position="111"/>
    </location>
</feature>
<feature type="propeptide" id="PRO_0000036501" evidence="1">
    <location>
        <begin position="112"/>
        <end position="163"/>
    </location>
</feature>
<feature type="peptide" id="PRO_0000036502" description="Hexon-linking protein-C" evidence="1">
    <location>
        <begin position="164"/>
        <end position="233"/>
    </location>
</feature>
<feature type="site" description="Cleavage; by viral protease" evidence="1">
    <location>
        <begin position="111"/>
        <end position="112"/>
    </location>
</feature>
<feature type="site" description="Cleavage; by viral protease" evidence="1">
    <location>
        <begin position="163"/>
        <end position="164"/>
    </location>
</feature>
<feature type="modified residue" description="Phosphothreonine; by host" evidence="1">
    <location>
        <position position="64"/>
    </location>
</feature>
<feature type="modified residue" description="Phosphoserine; by host" evidence="1">
    <location>
        <position position="180"/>
    </location>
</feature>
<keyword id="KW-0002">3D-structure</keyword>
<keyword id="KW-0167">Capsid protein</keyword>
<keyword id="KW-1048">Host nucleus</keyword>
<keyword id="KW-0426">Late protein</keyword>
<keyword id="KW-0597">Phosphoprotein</keyword>
<keyword id="KW-0946">Virion</keyword>
<accession>P11822</accession>
<gene>
    <name evidence="1" type="primary">L4</name>
</gene>